<gene>
    <name type="primary">rbx1</name>
    <name type="ORF">DDB_G0287629</name>
</gene>
<sequence>MADVEASSSASKTPKKKFEVKRWNAVALWIWDIVVDNCAICRNHIMDLCIECQANQASNTSEECTVAWGICNHAFHFHCISRWLKSRQVCPLDNRDWEFQKYGR</sequence>
<protein>
    <recommendedName>
        <fullName>RING-box protein 1</fullName>
    </recommendedName>
</protein>
<proteinExistence type="inferred from homology"/>
<comment type="function">
    <text evidence="1">Component of the SCF (SKP1-CUL1-F-box protein) E3 ubiquitin ligase complex, which mediates the ubiquitination and subsequent proteasomal degradation of target proteins. Through the RING-type zinc finger, seems to recruit the E2 ubiquitination enzyme to the complex and brings it into close proximity to the substrate (By similarity).</text>
</comment>
<comment type="pathway">
    <text>Protein modification; protein ubiquitination.</text>
</comment>
<comment type="subunit">
    <text evidence="1">Part of SCF complexes, which consist of a skp1 or a skp1-related protein, a cullin protein, and a F-box protein.</text>
</comment>
<comment type="subcellular location">
    <subcellularLocation>
        <location evidence="1">Cytoplasm</location>
    </subcellularLocation>
    <subcellularLocation>
        <location evidence="1">Nucleus</location>
    </subcellularLocation>
</comment>
<comment type="domain">
    <text evidence="1">The RING-type zinc finger domain is essential for ubiquitin ligase activity. It coordinates an additional third zinc ion (By similarity).</text>
</comment>
<comment type="similarity">
    <text evidence="4">Belongs to the RING-box family.</text>
</comment>
<feature type="chain" id="PRO_0000327751" description="RING-box protein 1">
    <location>
        <begin position="1"/>
        <end position="104"/>
    </location>
</feature>
<feature type="zinc finger region" description="RING-type; degenerate" evidence="3">
    <location>
        <begin position="49"/>
        <end position="94"/>
    </location>
</feature>
<feature type="binding site" evidence="2">
    <location>
        <position position="38"/>
    </location>
    <ligand>
        <name>Zn(2+)</name>
        <dbReference type="ChEBI" id="CHEBI:29105"/>
        <label>1</label>
    </ligand>
</feature>
<feature type="binding site" evidence="2">
    <location>
        <position position="41"/>
    </location>
    <ligand>
        <name>Zn(2+)</name>
        <dbReference type="ChEBI" id="CHEBI:29105"/>
        <label>1</label>
    </ligand>
</feature>
<feature type="binding site" evidence="2">
    <location>
        <position position="49"/>
    </location>
    <ligand>
        <name>Zn(2+)</name>
        <dbReference type="ChEBI" id="CHEBI:29105"/>
        <label>2</label>
    </ligand>
</feature>
<feature type="binding site" evidence="2">
    <location>
        <position position="52"/>
    </location>
    <ligand>
        <name>Zn(2+)</name>
        <dbReference type="ChEBI" id="CHEBI:29105"/>
        <label>2</label>
    </ligand>
</feature>
<feature type="binding site" evidence="2">
    <location>
        <position position="64"/>
    </location>
    <ligand>
        <name>Zn(2+)</name>
        <dbReference type="ChEBI" id="CHEBI:29105"/>
        <label>2</label>
    </ligand>
</feature>
<feature type="binding site" evidence="2">
    <location>
        <position position="71"/>
    </location>
    <ligand>
        <name>Zn(2+)</name>
        <dbReference type="ChEBI" id="CHEBI:29105"/>
        <label>3</label>
    </ligand>
</feature>
<feature type="binding site" evidence="2">
    <location>
        <position position="73"/>
    </location>
    <ligand>
        <name>Zn(2+)</name>
        <dbReference type="ChEBI" id="CHEBI:29105"/>
        <label>3</label>
    </ligand>
</feature>
<feature type="binding site" evidence="2">
    <location>
        <position position="76"/>
    </location>
    <ligand>
        <name>Zn(2+)</name>
        <dbReference type="ChEBI" id="CHEBI:29105"/>
        <label>1</label>
    </ligand>
</feature>
<feature type="binding site" evidence="2">
    <location>
        <position position="78"/>
    </location>
    <ligand>
        <name>Zn(2+)</name>
        <dbReference type="ChEBI" id="CHEBI:29105"/>
        <label>2</label>
    </ligand>
</feature>
<feature type="binding site" evidence="2">
    <location>
        <position position="90"/>
    </location>
    <ligand>
        <name>Zn(2+)</name>
        <dbReference type="ChEBI" id="CHEBI:29105"/>
        <label>3</label>
    </ligand>
</feature>
<feature type="binding site" evidence="2">
    <location>
        <position position="93"/>
    </location>
    <ligand>
        <name>Zn(2+)</name>
        <dbReference type="ChEBI" id="CHEBI:29105"/>
        <label>3</label>
    </ligand>
</feature>
<reference key="1">
    <citation type="journal article" date="2005" name="Nature">
        <title>The genome of the social amoeba Dictyostelium discoideum.</title>
        <authorList>
            <person name="Eichinger L."/>
            <person name="Pachebat J.A."/>
            <person name="Gloeckner G."/>
            <person name="Rajandream M.A."/>
            <person name="Sucgang R."/>
            <person name="Berriman M."/>
            <person name="Song J."/>
            <person name="Olsen R."/>
            <person name="Szafranski K."/>
            <person name="Xu Q."/>
            <person name="Tunggal B."/>
            <person name="Kummerfeld S."/>
            <person name="Madera M."/>
            <person name="Konfortov B.A."/>
            <person name="Rivero F."/>
            <person name="Bankier A.T."/>
            <person name="Lehmann R."/>
            <person name="Hamlin N."/>
            <person name="Davies R."/>
            <person name="Gaudet P."/>
            <person name="Fey P."/>
            <person name="Pilcher K."/>
            <person name="Chen G."/>
            <person name="Saunders D."/>
            <person name="Sodergren E.J."/>
            <person name="Davis P."/>
            <person name="Kerhornou A."/>
            <person name="Nie X."/>
            <person name="Hall N."/>
            <person name="Anjard C."/>
            <person name="Hemphill L."/>
            <person name="Bason N."/>
            <person name="Farbrother P."/>
            <person name="Desany B."/>
            <person name="Just E."/>
            <person name="Morio T."/>
            <person name="Rost R."/>
            <person name="Churcher C.M."/>
            <person name="Cooper J."/>
            <person name="Haydock S."/>
            <person name="van Driessche N."/>
            <person name="Cronin A."/>
            <person name="Goodhead I."/>
            <person name="Muzny D.M."/>
            <person name="Mourier T."/>
            <person name="Pain A."/>
            <person name="Lu M."/>
            <person name="Harper D."/>
            <person name="Lindsay R."/>
            <person name="Hauser H."/>
            <person name="James K.D."/>
            <person name="Quiles M."/>
            <person name="Madan Babu M."/>
            <person name="Saito T."/>
            <person name="Buchrieser C."/>
            <person name="Wardroper A."/>
            <person name="Felder M."/>
            <person name="Thangavelu M."/>
            <person name="Johnson D."/>
            <person name="Knights A."/>
            <person name="Loulseged H."/>
            <person name="Mungall K.L."/>
            <person name="Oliver K."/>
            <person name="Price C."/>
            <person name="Quail M.A."/>
            <person name="Urushihara H."/>
            <person name="Hernandez J."/>
            <person name="Rabbinowitsch E."/>
            <person name="Steffen D."/>
            <person name="Sanders M."/>
            <person name="Ma J."/>
            <person name="Kohara Y."/>
            <person name="Sharp S."/>
            <person name="Simmonds M.N."/>
            <person name="Spiegler S."/>
            <person name="Tivey A."/>
            <person name="Sugano S."/>
            <person name="White B."/>
            <person name="Walker D."/>
            <person name="Woodward J.R."/>
            <person name="Winckler T."/>
            <person name="Tanaka Y."/>
            <person name="Shaulsky G."/>
            <person name="Schleicher M."/>
            <person name="Weinstock G.M."/>
            <person name="Rosenthal A."/>
            <person name="Cox E.C."/>
            <person name="Chisholm R.L."/>
            <person name="Gibbs R.A."/>
            <person name="Loomis W.F."/>
            <person name="Platzer M."/>
            <person name="Kay R.R."/>
            <person name="Williams J.G."/>
            <person name="Dear P.H."/>
            <person name="Noegel A.A."/>
            <person name="Barrell B.G."/>
            <person name="Kuspa A."/>
        </authorList>
    </citation>
    <scope>NUCLEOTIDE SEQUENCE [LARGE SCALE GENOMIC DNA]</scope>
    <source>
        <strain>AX4</strain>
    </source>
</reference>
<keyword id="KW-0963">Cytoplasm</keyword>
<keyword id="KW-0479">Metal-binding</keyword>
<keyword id="KW-0539">Nucleus</keyword>
<keyword id="KW-1185">Reference proteome</keyword>
<keyword id="KW-0833">Ubl conjugation pathway</keyword>
<keyword id="KW-0862">Zinc</keyword>
<keyword id="KW-0863">Zinc-finger</keyword>
<dbReference type="EMBL" id="AAFI02000103">
    <property type="protein sequence ID" value="EAL63623.1"/>
    <property type="molecule type" value="Genomic_DNA"/>
</dbReference>
<dbReference type="RefSeq" id="XP_637131.1">
    <property type="nucleotide sequence ID" value="XM_632039.1"/>
</dbReference>
<dbReference type="SMR" id="Q54K33"/>
<dbReference type="FunCoup" id="Q54K33">
    <property type="interactions" value="999"/>
</dbReference>
<dbReference type="STRING" id="44689.Q54K33"/>
<dbReference type="PaxDb" id="44689-DDB0231276"/>
<dbReference type="EnsemblProtists" id="EAL63623">
    <property type="protein sequence ID" value="EAL63623"/>
    <property type="gene ID" value="DDB_G0287629"/>
</dbReference>
<dbReference type="GeneID" id="8626226"/>
<dbReference type="KEGG" id="ddi:DDB_G0287629"/>
<dbReference type="dictyBase" id="DDB_G0287629">
    <property type="gene designation" value="rbx1"/>
</dbReference>
<dbReference type="VEuPathDB" id="AmoebaDB:DDB_G0287629"/>
<dbReference type="eggNOG" id="KOG2930">
    <property type="taxonomic scope" value="Eukaryota"/>
</dbReference>
<dbReference type="HOGENOM" id="CLU_115512_2_1_1"/>
<dbReference type="InParanoid" id="Q54K33"/>
<dbReference type="OMA" id="NACPLDN"/>
<dbReference type="PhylomeDB" id="Q54K33"/>
<dbReference type="Reactome" id="R-DDI-110314">
    <property type="pathway name" value="Recognition of DNA damage by PCNA-containing replication complex"/>
</dbReference>
<dbReference type="Reactome" id="R-DDI-4641258">
    <property type="pathway name" value="Degradation of DVL"/>
</dbReference>
<dbReference type="Reactome" id="R-DDI-5632684">
    <property type="pathway name" value="Hedgehog 'on' state"/>
</dbReference>
<dbReference type="Reactome" id="R-DDI-5658442">
    <property type="pathway name" value="Regulation of RAS by GAPs"/>
</dbReference>
<dbReference type="Reactome" id="R-DDI-5696394">
    <property type="pathway name" value="DNA Damage Recognition in GG-NER"/>
</dbReference>
<dbReference type="Reactome" id="R-DDI-5696395">
    <property type="pathway name" value="Formation of Incision Complex in GG-NER"/>
</dbReference>
<dbReference type="Reactome" id="R-DDI-6781823">
    <property type="pathway name" value="Formation of TC-NER Pre-Incision Complex"/>
</dbReference>
<dbReference type="Reactome" id="R-DDI-6782135">
    <property type="pathway name" value="Dual incision in TC-NER"/>
</dbReference>
<dbReference type="Reactome" id="R-DDI-6782210">
    <property type="pathway name" value="Gap-filling DNA repair synthesis and ligation in TC-NER"/>
</dbReference>
<dbReference type="Reactome" id="R-DDI-68949">
    <property type="pathway name" value="Orc1 removal from chromatin"/>
</dbReference>
<dbReference type="Reactome" id="R-DDI-8854050">
    <property type="pathway name" value="FBXL7 down-regulates AURKA during mitotic entry and in early mitosis"/>
</dbReference>
<dbReference type="Reactome" id="R-DDI-8951664">
    <property type="pathway name" value="Neddylation"/>
</dbReference>
<dbReference type="Reactome" id="R-DDI-9755511">
    <property type="pathway name" value="KEAP1-NFE2L2 pathway"/>
</dbReference>
<dbReference type="Reactome" id="R-DDI-983168">
    <property type="pathway name" value="Antigen processing: Ubiquitination &amp; Proteasome degradation"/>
</dbReference>
<dbReference type="UniPathway" id="UPA00143"/>
<dbReference type="PRO" id="PR:Q54K33"/>
<dbReference type="Proteomes" id="UP000002195">
    <property type="component" value="Chromosome 5"/>
</dbReference>
<dbReference type="GO" id="GO:0031461">
    <property type="term" value="C:cullin-RING ubiquitin ligase complex"/>
    <property type="evidence" value="ECO:0000318"/>
    <property type="project" value="GO_Central"/>
</dbReference>
<dbReference type="GO" id="GO:0005737">
    <property type="term" value="C:cytoplasm"/>
    <property type="evidence" value="ECO:0007669"/>
    <property type="project" value="UniProtKB-SubCell"/>
</dbReference>
<dbReference type="GO" id="GO:0005634">
    <property type="term" value="C:nucleus"/>
    <property type="evidence" value="ECO:0000318"/>
    <property type="project" value="GO_Central"/>
</dbReference>
<dbReference type="GO" id="GO:0097602">
    <property type="term" value="F:cullin family protein binding"/>
    <property type="evidence" value="ECO:0000353"/>
    <property type="project" value="dictyBase"/>
</dbReference>
<dbReference type="GO" id="GO:0061630">
    <property type="term" value="F:ubiquitin protein ligase activity"/>
    <property type="evidence" value="ECO:0000318"/>
    <property type="project" value="GO_Central"/>
</dbReference>
<dbReference type="GO" id="GO:0008270">
    <property type="term" value="F:zinc ion binding"/>
    <property type="evidence" value="ECO:0007669"/>
    <property type="project" value="UniProtKB-KW"/>
</dbReference>
<dbReference type="GO" id="GO:0016567">
    <property type="term" value="P:protein ubiquitination"/>
    <property type="evidence" value="ECO:0000318"/>
    <property type="project" value="GO_Central"/>
</dbReference>
<dbReference type="GO" id="GO:0006511">
    <property type="term" value="P:ubiquitin-dependent protein catabolic process"/>
    <property type="evidence" value="ECO:0000318"/>
    <property type="project" value="GO_Central"/>
</dbReference>
<dbReference type="CDD" id="cd16485">
    <property type="entry name" value="mRING-H2-C3H2C2D_RBX1"/>
    <property type="match status" value="1"/>
</dbReference>
<dbReference type="FunFam" id="3.30.40.10:FF:000010">
    <property type="entry name" value="E3 ubiquitin-protein ligase RBX1"/>
    <property type="match status" value="1"/>
</dbReference>
<dbReference type="Gene3D" id="3.30.40.10">
    <property type="entry name" value="Zinc/RING finger domain, C3HC4 (zinc finger)"/>
    <property type="match status" value="1"/>
</dbReference>
<dbReference type="InterPro" id="IPR051031">
    <property type="entry name" value="RING-box_E3_Ubiquitin_Ligase"/>
</dbReference>
<dbReference type="InterPro" id="IPR001841">
    <property type="entry name" value="Znf_RING"/>
</dbReference>
<dbReference type="InterPro" id="IPR013083">
    <property type="entry name" value="Znf_RING/FYVE/PHD"/>
</dbReference>
<dbReference type="InterPro" id="IPR024766">
    <property type="entry name" value="Znf_RING_H2"/>
</dbReference>
<dbReference type="PANTHER" id="PTHR11210">
    <property type="entry name" value="RING BOX"/>
    <property type="match status" value="1"/>
</dbReference>
<dbReference type="Pfam" id="PF12678">
    <property type="entry name" value="zf-rbx1"/>
    <property type="match status" value="1"/>
</dbReference>
<dbReference type="SUPFAM" id="SSF57850">
    <property type="entry name" value="RING/U-box"/>
    <property type="match status" value="1"/>
</dbReference>
<dbReference type="PROSITE" id="PS50089">
    <property type="entry name" value="ZF_RING_2"/>
    <property type="match status" value="1"/>
</dbReference>
<evidence type="ECO:0000250" key="1"/>
<evidence type="ECO:0000250" key="2">
    <source>
        <dbReference type="UniProtKB" id="P62878"/>
    </source>
</evidence>
<evidence type="ECO:0000255" key="3">
    <source>
        <dbReference type="PROSITE-ProRule" id="PRU00175"/>
    </source>
</evidence>
<evidence type="ECO:0000305" key="4"/>
<accession>Q54K33</accession>
<organism>
    <name type="scientific">Dictyostelium discoideum</name>
    <name type="common">Social amoeba</name>
    <dbReference type="NCBI Taxonomy" id="44689"/>
    <lineage>
        <taxon>Eukaryota</taxon>
        <taxon>Amoebozoa</taxon>
        <taxon>Evosea</taxon>
        <taxon>Eumycetozoa</taxon>
        <taxon>Dictyostelia</taxon>
        <taxon>Dictyosteliales</taxon>
        <taxon>Dictyosteliaceae</taxon>
        <taxon>Dictyostelium</taxon>
    </lineage>
</organism>
<name>RBX1_DICDI</name>